<dbReference type="EC" id="6.3.2.-" evidence="2"/>
<dbReference type="FunCoup" id="A0A3Q0KR05">
    <property type="interactions" value="15"/>
</dbReference>
<dbReference type="STRING" id="6183.A0A3Q0KR05"/>
<dbReference type="EnsemblMetazoa" id="Smp_158480.1">
    <property type="protein sequence ID" value="Smp_158480.1"/>
    <property type="gene ID" value="Smp_158480"/>
</dbReference>
<dbReference type="WBParaSite" id="Smp_158480.1">
    <property type="protein sequence ID" value="Smp_158480.1"/>
    <property type="gene ID" value="Smp_158480"/>
</dbReference>
<dbReference type="InParanoid" id="A0A3Q0KR05"/>
<dbReference type="OrthoDB" id="416786at2759"/>
<dbReference type="Proteomes" id="UP000008854">
    <property type="component" value="Unassembled WGS sequence"/>
</dbReference>
<dbReference type="GO" id="GO:0003833">
    <property type="term" value="F:beta-alanyl amine synthase activity"/>
    <property type="evidence" value="ECO:0000314"/>
    <property type="project" value="UniProtKB"/>
</dbReference>
<dbReference type="GO" id="GO:0043042">
    <property type="term" value="P:amino acid adenylylation by nonribosomal peptide synthase"/>
    <property type="evidence" value="ECO:0000314"/>
    <property type="project" value="UniProtKB"/>
</dbReference>
<dbReference type="GO" id="GO:0030540">
    <property type="term" value="P:female genitalia development"/>
    <property type="evidence" value="ECO:0000315"/>
    <property type="project" value="UniProtKB"/>
</dbReference>
<dbReference type="Gene3D" id="3.30.300.30">
    <property type="match status" value="1"/>
</dbReference>
<dbReference type="Gene3D" id="3.40.630.30">
    <property type="match status" value="1"/>
</dbReference>
<dbReference type="Gene3D" id="3.40.50.12780">
    <property type="entry name" value="N-terminal domain of ligase-like"/>
    <property type="match status" value="1"/>
</dbReference>
<dbReference type="InterPro" id="IPR045851">
    <property type="entry name" value="AMP-bd_C_sf"/>
</dbReference>
<dbReference type="InterPro" id="IPR000873">
    <property type="entry name" value="AMP-dep_synth/lig_dom"/>
</dbReference>
<dbReference type="InterPro" id="IPR042099">
    <property type="entry name" value="ANL_N_sf"/>
</dbReference>
<dbReference type="InterPro" id="IPR009081">
    <property type="entry name" value="PP-bd_ACP"/>
</dbReference>
<dbReference type="InterPro" id="IPR006162">
    <property type="entry name" value="Ppantetheine_attach_site"/>
</dbReference>
<dbReference type="PANTHER" id="PTHR44845:SF6">
    <property type="entry name" value="BETA-ALANINE-ACTIVATING ENZYME"/>
    <property type="match status" value="1"/>
</dbReference>
<dbReference type="PANTHER" id="PTHR44845">
    <property type="entry name" value="CARRIER DOMAIN-CONTAINING PROTEIN"/>
    <property type="match status" value="1"/>
</dbReference>
<dbReference type="Pfam" id="PF00501">
    <property type="entry name" value="AMP-binding"/>
    <property type="match status" value="1"/>
</dbReference>
<dbReference type="Pfam" id="PF00550">
    <property type="entry name" value="PP-binding"/>
    <property type="match status" value="1"/>
</dbReference>
<dbReference type="SUPFAM" id="SSF56801">
    <property type="entry name" value="Acetyl-CoA synthetase-like"/>
    <property type="match status" value="1"/>
</dbReference>
<dbReference type="PROSITE" id="PS50075">
    <property type="entry name" value="CARRIER"/>
    <property type="match status" value="1"/>
</dbReference>
<dbReference type="PROSITE" id="PS00012">
    <property type="entry name" value="PHOSPHOPANTETHEINE"/>
    <property type="match status" value="1"/>
</dbReference>
<comment type="function">
    <text evidence="2">Catalyzes the condensation of beta-alanine with tryptamine to form beta-alanyl-tryptamine (BATT) (PubMed:35385687). Beta-alanyl-tryptamine is an essential pheromone produced by the male that stimulates female sexual development during pairing (PubMed:35385687).</text>
</comment>
<comment type="catalytic activity">
    <reaction evidence="2">
        <text>tryptamine + beta-alanine + ATP = beta-alanyl-tryptamine + AMP + diphosphate + H(+)</text>
        <dbReference type="Rhea" id="RHEA:73335"/>
        <dbReference type="ChEBI" id="CHEBI:15378"/>
        <dbReference type="ChEBI" id="CHEBI:30616"/>
        <dbReference type="ChEBI" id="CHEBI:33019"/>
        <dbReference type="ChEBI" id="CHEBI:57887"/>
        <dbReference type="ChEBI" id="CHEBI:57966"/>
        <dbReference type="ChEBI" id="CHEBI:192794"/>
        <dbReference type="ChEBI" id="CHEBI:456215"/>
    </reaction>
    <physiologicalReaction direction="left-to-right" evidence="2">
        <dbReference type="Rhea" id="RHEA:73336"/>
    </physiologicalReaction>
</comment>
<comment type="catalytic activity">
    <reaction evidence="2">
        <text>beta-alanine + ATP + H(+) = beta-alanyl-5'-AMP + diphosphate</text>
        <dbReference type="Rhea" id="RHEA:73339"/>
        <dbReference type="ChEBI" id="CHEBI:15378"/>
        <dbReference type="ChEBI" id="CHEBI:30616"/>
        <dbReference type="ChEBI" id="CHEBI:33019"/>
        <dbReference type="ChEBI" id="CHEBI:57966"/>
        <dbReference type="ChEBI" id="CHEBI:192795"/>
    </reaction>
    <physiologicalReaction direction="left-to-right" evidence="2">
        <dbReference type="Rhea" id="RHEA:73340"/>
    </physiologicalReaction>
</comment>
<comment type="catalytic activity">
    <reaction evidence="2">
        <text>beta-alanyl-5'-AMP + holo-[peptidyl-carrier protein] = beta-alanyl-[peptidyl-carrier protein] + AMP + H(+)</text>
        <dbReference type="Rhea" id="RHEA:73343"/>
        <dbReference type="Rhea" id="RHEA-COMP:11480"/>
        <dbReference type="Rhea" id="RHEA-COMP:18218"/>
        <dbReference type="ChEBI" id="CHEBI:15378"/>
        <dbReference type="ChEBI" id="CHEBI:64479"/>
        <dbReference type="ChEBI" id="CHEBI:192795"/>
        <dbReference type="ChEBI" id="CHEBI:192796"/>
        <dbReference type="ChEBI" id="CHEBI:456215"/>
    </reaction>
    <physiologicalReaction direction="left-to-right" evidence="2">
        <dbReference type="Rhea" id="RHEA:73344"/>
    </physiologicalReaction>
</comment>
<comment type="catalytic activity">
    <reaction evidence="2">
        <text>beta-alanyl-[peptidyl-carrier protein] + tryptamine = beta-alanyl-tryptamine + holo-[peptidyl-carrier protein] + H(+)</text>
        <dbReference type="Rhea" id="RHEA:73347"/>
        <dbReference type="Rhea" id="RHEA-COMP:11480"/>
        <dbReference type="Rhea" id="RHEA-COMP:18218"/>
        <dbReference type="ChEBI" id="CHEBI:15378"/>
        <dbReference type="ChEBI" id="CHEBI:57887"/>
        <dbReference type="ChEBI" id="CHEBI:64479"/>
        <dbReference type="ChEBI" id="CHEBI:192794"/>
        <dbReference type="ChEBI" id="CHEBI:192796"/>
    </reaction>
    <physiologicalReaction direction="left-to-right" evidence="2">
        <dbReference type="Rhea" id="RHEA:73348"/>
    </physiologicalReaction>
</comment>
<comment type="cofactor">
    <cofactor evidence="1">
        <name>pantetheine 4'-phosphate</name>
        <dbReference type="ChEBI" id="CHEBI:47942"/>
    </cofactor>
</comment>
<comment type="tissue specificity">
    <text evidence="2">In virgin and paired males, bilaterally expressed in some cells in the head (PubMed:35385687). During pairing, expressed throughout the ventral side of the body probably in ciliated neurons (PubMed:35385687). Highly expressed in virgin females in cells throughout the body and only weakly expressed in sexually mature females. In virgin females, expressed in some cells in the head and on the dorsal surface and lateral edges of body (PubMed:35385687).</text>
</comment>
<comment type="induction">
    <text evidence="2">Induced in male within 24 hours of pairing and levels rapidly diminish within 12 hours of becoming separated from the female.</text>
</comment>
<comment type="domain">
    <text evidence="2 5">The nonribosomal peptide synthase is composed of three domains. The adenylation (A) domain is responsible for the adenylation and activation of beta-alanine using ATP (Probable). The thiolation (T) or peptidyl carrier protein domain (PCP) contains the prosthetic group 4'-phosphopantetheine; activated beta-alanyl-AMP is transferred to the prosthetic group via thiolation (PubMed:35385687). The condensation (C) domain performs the selection of the amine substrate, tryptamine, and the condensation of this amine with beta-alanine via an amide bond (Probable).</text>
</comment>
<comment type="disruption phenotype">
    <text evidence="2">RNAi-mediated knockdown in males, severely impairs vitellaria and ovary development in females resulting in a severe reduction in egg production (PubMed:35385687). Also, production of beta-alanyl-tryptamine (BATT) is impaired (PubMed:35385687).</text>
</comment>
<comment type="similarity">
    <text evidence="4">Belongs to the NRP synthetase family.</text>
</comment>
<organism evidence="6">
    <name type="scientific">Schistosoma mansoni</name>
    <name type="common">Blood fluke</name>
    <dbReference type="NCBI Taxonomy" id="6183"/>
    <lineage>
        <taxon>Eukaryota</taxon>
        <taxon>Metazoa</taxon>
        <taxon>Spiralia</taxon>
        <taxon>Lophotrochozoa</taxon>
        <taxon>Platyhelminthes</taxon>
        <taxon>Trematoda</taxon>
        <taxon>Digenea</taxon>
        <taxon>Strigeidida</taxon>
        <taxon>Schistosomatoidea</taxon>
        <taxon>Schistosomatidae</taxon>
        <taxon>Schistosoma</taxon>
    </lineage>
</organism>
<feature type="chain" id="PRO_0000456802" description="Beta-alanyl-bioamine nonribosomal peptide synthetase">
    <location>
        <begin position="1"/>
        <end position="1227"/>
    </location>
</feature>
<feature type="domain" description="Carrier" evidence="1">
    <location>
        <begin position="851"/>
        <end position="931"/>
    </location>
</feature>
<feature type="region of interest" description="Adenylation" evidence="5">
    <location>
        <begin position="1"/>
        <end position="850"/>
    </location>
</feature>
<feature type="region of interest" description="Condensation" evidence="5">
    <location>
        <begin position="932"/>
        <end position="1227"/>
    </location>
</feature>
<feature type="modified residue" description="O-(pantetheine 4'-phosphoryl)serine" evidence="1">
    <location>
        <position position="892"/>
    </location>
</feature>
<feature type="mutagenesis site" description="Does not affect the adenylation of beta-alanine; however the conjugation of beta-alanine to the enzyme is impaired." evidence="2">
    <original>S</original>
    <variation>A</variation>
    <location>
        <position position="892"/>
    </location>
</feature>
<evidence type="ECO:0000255" key="1">
    <source>
        <dbReference type="PROSITE-ProRule" id="PRU00258"/>
    </source>
</evidence>
<evidence type="ECO:0000269" key="2">
    <source>
    </source>
</evidence>
<evidence type="ECO:0000303" key="3">
    <source>
    </source>
</evidence>
<evidence type="ECO:0000305" key="4"/>
<evidence type="ECO:0000305" key="5">
    <source>
    </source>
</evidence>
<evidence type="ECO:0000312" key="6">
    <source>
        <dbReference type="Proteomes" id="UP000008854"/>
    </source>
</evidence>
<name>NPRS_SCHMA</name>
<accession>A0A3Q0KR05</accession>
<reference evidence="6" key="1">
    <citation type="journal article" date="2012" name="PLoS Negl. Trop. Dis.">
        <title>A systematically improved high quality genome and transcriptome of the human blood fluke Schistosoma mansoni.</title>
        <authorList>
            <person name="Protasio A.V."/>
            <person name="Tsai I.J."/>
            <person name="Babbage A."/>
            <person name="Nichol S."/>
            <person name="Hunt M."/>
            <person name="Aslett M.A."/>
            <person name="De Silva N."/>
            <person name="Velarde G.S."/>
            <person name="Anderson T.J."/>
            <person name="Clark R.C."/>
            <person name="Davidson C."/>
            <person name="Dillon G.P."/>
            <person name="Holroyd N.E."/>
            <person name="LoVerde P.T."/>
            <person name="Lloyd C."/>
            <person name="McQuillan J."/>
            <person name="Oliveira G."/>
            <person name="Otto T.D."/>
            <person name="Parker-Manuel S.J."/>
            <person name="Quail M.A."/>
            <person name="Wilson R.A."/>
            <person name="Zerlotini A."/>
            <person name="Dunne D.W."/>
            <person name="Berriman M."/>
        </authorList>
    </citation>
    <scope>NUCLEOTIDE SEQUENCE [LARGE SCALE GENOMIC DNA]</scope>
    <source>
        <strain evidence="6">Puerto Rican</strain>
    </source>
</reference>
<reference evidence="4" key="2">
    <citation type="journal article" date="2022" name="Cell">
        <title>A male-derived nonribosomal peptide pheromone controls female schistosome development.</title>
        <authorList>
            <person name="Chen R."/>
            <person name="Wang J."/>
            <person name="Gradinaru I."/>
            <person name="Vu H.S."/>
            <person name="Geboers S."/>
            <person name="Naidoo J."/>
            <person name="Ready J.M."/>
            <person name="Williams N.S."/>
            <person name="DeBerardinis R.J."/>
            <person name="Ross E.M."/>
            <person name="Collins J.J. III"/>
        </authorList>
    </citation>
    <scope>FUNCTION</scope>
    <scope>CATALYTIC ACTIVITY</scope>
    <scope>TISSUE SPECIFICITY</scope>
    <scope>INDUCTION</scope>
    <scope>DOMAIN</scope>
    <scope>DISRUPTION PHENOTYPE</scope>
    <scope>MUTAGENESIS OF SER-892</scope>
</reference>
<keyword id="KW-0436">Ligase</keyword>
<keyword id="KW-0596">Phosphopantetheine</keyword>
<keyword id="KW-0597">Phosphoprotein</keyword>
<keyword id="KW-1185">Reference proteome</keyword>
<sequence>MPQSTAQLKSPLLHTLLENLTQSSICTSTAIWHVPNPVNFVCNHNENSFDNKNNSVTTITTTDVSTNNHKNTNYDYEQQEQWSNEEINSNQESNEIYTMTFLKLNNAANRVAMNLANYLERKWSSITNKINRTQLNQHSLSIDEPIELRNQSDTVIALFMPPGIDRIVVQIACMKLHLAYMPLDRNVPAGRITQILHKLKPILILIDKDYYDFIYDDDHNDNDKMSDLSSSIDNNNKSLLSRKLSSNDFIIGNLNQLKLTFQLFDVKVYEYIKLMKLSKYYSRSDIYTASIPIRVCLFPFESDPIVLVLFTSGSTSSGPKPVKLRTTQLFNRLEWQWDSTSDMDLPNFENATCNSNTSVKRIGLAKTAWGFVDAFTELFSCLLAGIPVVVPGGSACPSEKSITDVQQLINLTKHFKISHITTVPTQMNLWLKQLRLKPKEIVTSHLSSLRTVIVSGDIVHPKMACEFFQLFKNPEMRLINLYGTTEVAGDVTGLVFRGEIDVKKHTKVVPCGLERENNKSGKPVLSVGTVIQGTAIFIVQDDDDHHLHHEKDNENQPDKWSNPSLSIIGSVDRKPNWDKFPFKILPKGHIGHVCILGQQVSDSASRCQRIESLPEDLNCVDTNKCKSDVESCENNSSKEIRVFMPGDLGFIDPQTNHLYICGRTNELIKINGIRFHANDIDNLFIELKKNWKAKNMTNCTREELLVNKVSETVTLTIQTVHGRDLKLVCFYVLHMNENQNTMNIEPKENYDKLEDLPKQDDFIAVFSHYLPPYLSPTFINIDHIPLMRTSGKVDKEYLRQYYYSKHHCEISEITKVLQPGWVNDPVKHMTENNNSTSDQSFGKNSRDFKLSRGRERARKVLAEVLGIRGPNGDVIPGRPKDDEDFYLLGGDSLLTVLTTEQLRQLGFNVNLDVFTKTGKIGSILTSLQNTESDFLKTQEPFTSDSWTVKEISMNKVLKKSHTCNLINRIPLMEDECYLSPTICPQGSYEIFIEQWNDGNFSVTERHEIVDVLVNAFIEKDRLSHALKLDRTDLTEAIEVFLNAHKSNPGIVLTARYYYENPYEHTFVKNKLVGVIISLPAKHVPSLHLTPKLALVQRFFDECSNKDQFQDISMDNLLATQMVAITSQSPYSKSKYLQYMLSNWKKISLKLLTRLERDLLRIAAKQGYSGVITFNTNEVTEEVCSQLGYKVIQTTMLKSFMNKENLLLLPQYERIRCSYMIKELNPSS</sequence>
<gene>
    <name evidence="3" type="primary">NRPS</name>
    <name type="ORF">Smp_158480</name>
</gene>
<protein>
    <recommendedName>
        <fullName evidence="3">Beta-alanyl-bioamine nonribosomal peptide synthetase</fullName>
        <ecNumber evidence="2">6.3.2.-</ecNumber>
    </recommendedName>
    <alternativeName>
        <fullName evidence="3">Nonribosomal peptide synthetase</fullName>
        <shortName evidence="3">SmNRPS</shortName>
    </alternativeName>
</protein>
<proteinExistence type="evidence at protein level"/>